<organism>
    <name type="scientific">Arabidopsis thaliana</name>
    <name type="common">Mouse-ear cress</name>
    <dbReference type="NCBI Taxonomy" id="3702"/>
    <lineage>
        <taxon>Eukaryota</taxon>
        <taxon>Viridiplantae</taxon>
        <taxon>Streptophyta</taxon>
        <taxon>Embryophyta</taxon>
        <taxon>Tracheophyta</taxon>
        <taxon>Spermatophyta</taxon>
        <taxon>Magnoliopsida</taxon>
        <taxon>eudicotyledons</taxon>
        <taxon>Gunneridae</taxon>
        <taxon>Pentapetalae</taxon>
        <taxon>rosids</taxon>
        <taxon>malvids</taxon>
        <taxon>Brassicales</taxon>
        <taxon>Brassicaceae</taxon>
        <taxon>Camelineae</taxon>
        <taxon>Arabidopsis</taxon>
    </lineage>
</organism>
<accession>P29525</accession>
<evidence type="ECO:0000255" key="1"/>
<evidence type="ECO:0000256" key="2">
    <source>
        <dbReference type="SAM" id="MobiDB-lite"/>
    </source>
</evidence>
<evidence type="ECO:0000305" key="3"/>
<feature type="chain" id="PRO_0000108127" description="Oleosin 18.5 kDa">
    <location>
        <begin position="1"/>
        <end position="173"/>
    </location>
</feature>
<feature type="transmembrane region" description="Helical" evidence="1">
    <location>
        <begin position="54"/>
        <end position="74"/>
    </location>
</feature>
<feature type="transmembrane region" description="Helical" evidence="1">
    <location>
        <begin position="76"/>
        <end position="96"/>
    </location>
</feature>
<feature type="transmembrane region" description="Helical" evidence="1">
    <location>
        <begin position="97"/>
        <end position="117"/>
    </location>
</feature>
<feature type="region of interest" description="Polar">
    <location>
        <begin position="1"/>
        <end position="45"/>
    </location>
</feature>
<feature type="region of interest" description="Hydrophobic">
    <location>
        <begin position="46"/>
        <end position="117"/>
    </location>
</feature>
<feature type="region of interest" description="Disordered" evidence="2">
    <location>
        <begin position="151"/>
        <end position="173"/>
    </location>
</feature>
<feature type="compositionally biased region" description="Basic and acidic residues" evidence="2">
    <location>
        <begin position="158"/>
        <end position="167"/>
    </location>
</feature>
<name>OLEO1_ARATH</name>
<reference key="1">
    <citation type="journal article" date="1992" name="Plant Mol. Biol.">
        <title>Nucleotide sequence of an Arabidopsis thaliana oleosin gene.</title>
        <authorList>
            <person name="van Rooijen G.J."/>
            <person name="Terning L.I."/>
            <person name="Moloney M.M."/>
        </authorList>
    </citation>
    <scope>NUCLEOTIDE SEQUENCE [GENOMIC DNA]</scope>
</reference>
<reference key="2">
    <citation type="journal article" date="1999" name="Nature">
        <title>Sequence and analysis of chromosome 4 of the plant Arabidopsis thaliana.</title>
        <authorList>
            <person name="Mayer K.F.X."/>
            <person name="Schueller C."/>
            <person name="Wambutt R."/>
            <person name="Murphy G."/>
            <person name="Volckaert G."/>
            <person name="Pohl T."/>
            <person name="Duesterhoeft A."/>
            <person name="Stiekema W."/>
            <person name="Entian K.-D."/>
            <person name="Terryn N."/>
            <person name="Harris B."/>
            <person name="Ansorge W."/>
            <person name="Brandt P."/>
            <person name="Grivell L.A."/>
            <person name="Rieger M."/>
            <person name="Weichselgartner M."/>
            <person name="de Simone V."/>
            <person name="Obermaier B."/>
            <person name="Mache R."/>
            <person name="Mueller M."/>
            <person name="Kreis M."/>
            <person name="Delseny M."/>
            <person name="Puigdomenech P."/>
            <person name="Watson M."/>
            <person name="Schmidtheini T."/>
            <person name="Reichert B."/>
            <person name="Portetelle D."/>
            <person name="Perez-Alonso M."/>
            <person name="Boutry M."/>
            <person name="Bancroft I."/>
            <person name="Vos P."/>
            <person name="Hoheisel J."/>
            <person name="Zimmermann W."/>
            <person name="Wedler H."/>
            <person name="Ridley P."/>
            <person name="Langham S.-A."/>
            <person name="McCullagh B."/>
            <person name="Bilham L."/>
            <person name="Robben J."/>
            <person name="van der Schueren J."/>
            <person name="Grymonprez B."/>
            <person name="Chuang Y.-J."/>
            <person name="Vandenbussche F."/>
            <person name="Braeken M."/>
            <person name="Weltjens I."/>
            <person name="Voet M."/>
            <person name="Bastiaens I."/>
            <person name="Aert R."/>
            <person name="Defoor E."/>
            <person name="Weitzenegger T."/>
            <person name="Bothe G."/>
            <person name="Ramsperger U."/>
            <person name="Hilbert H."/>
            <person name="Braun M."/>
            <person name="Holzer E."/>
            <person name="Brandt A."/>
            <person name="Peters S."/>
            <person name="van Staveren M."/>
            <person name="Dirkse W."/>
            <person name="Mooijman P."/>
            <person name="Klein Lankhorst R."/>
            <person name="Rose M."/>
            <person name="Hauf J."/>
            <person name="Koetter P."/>
            <person name="Berneiser S."/>
            <person name="Hempel S."/>
            <person name="Feldpausch M."/>
            <person name="Lamberth S."/>
            <person name="Van den Daele H."/>
            <person name="De Keyser A."/>
            <person name="Buysshaert C."/>
            <person name="Gielen J."/>
            <person name="Villarroel R."/>
            <person name="De Clercq R."/>
            <person name="van Montagu M."/>
            <person name="Rogers J."/>
            <person name="Cronin A."/>
            <person name="Quail M.A."/>
            <person name="Bray-Allen S."/>
            <person name="Clark L."/>
            <person name="Doggett J."/>
            <person name="Hall S."/>
            <person name="Kay M."/>
            <person name="Lennard N."/>
            <person name="McLay K."/>
            <person name="Mayes R."/>
            <person name="Pettett A."/>
            <person name="Rajandream M.A."/>
            <person name="Lyne M."/>
            <person name="Benes V."/>
            <person name="Rechmann S."/>
            <person name="Borkova D."/>
            <person name="Bloecker H."/>
            <person name="Scharfe M."/>
            <person name="Grimm M."/>
            <person name="Loehnert T.-H."/>
            <person name="Dose S."/>
            <person name="de Haan M."/>
            <person name="Maarse A.C."/>
            <person name="Schaefer M."/>
            <person name="Mueller-Auer S."/>
            <person name="Gabel C."/>
            <person name="Fuchs M."/>
            <person name="Fartmann B."/>
            <person name="Granderath K."/>
            <person name="Dauner D."/>
            <person name="Herzl A."/>
            <person name="Neumann S."/>
            <person name="Argiriou A."/>
            <person name="Vitale D."/>
            <person name="Liguori R."/>
            <person name="Piravandi E."/>
            <person name="Massenet O."/>
            <person name="Quigley F."/>
            <person name="Clabauld G."/>
            <person name="Muendlein A."/>
            <person name="Felber R."/>
            <person name="Schnabl S."/>
            <person name="Hiller R."/>
            <person name="Schmidt W."/>
            <person name="Lecharny A."/>
            <person name="Aubourg S."/>
            <person name="Chefdor F."/>
            <person name="Cooke R."/>
            <person name="Berger C."/>
            <person name="Monfort A."/>
            <person name="Casacuberta E."/>
            <person name="Gibbons T."/>
            <person name="Weber N."/>
            <person name="Vandenbol M."/>
            <person name="Bargues M."/>
            <person name="Terol J."/>
            <person name="Torres A."/>
            <person name="Perez-Perez A."/>
            <person name="Purnelle B."/>
            <person name="Bent E."/>
            <person name="Johnson S."/>
            <person name="Tacon D."/>
            <person name="Jesse T."/>
            <person name="Heijnen L."/>
            <person name="Schwarz S."/>
            <person name="Scholler P."/>
            <person name="Heber S."/>
            <person name="Francs P."/>
            <person name="Bielke C."/>
            <person name="Frishman D."/>
            <person name="Haase D."/>
            <person name="Lemcke K."/>
            <person name="Mewes H.-W."/>
            <person name="Stocker S."/>
            <person name="Zaccaria P."/>
            <person name="Bevan M."/>
            <person name="Wilson R.K."/>
            <person name="de la Bastide M."/>
            <person name="Habermann K."/>
            <person name="Parnell L."/>
            <person name="Dedhia N."/>
            <person name="Gnoj L."/>
            <person name="Schutz K."/>
            <person name="Huang E."/>
            <person name="Spiegel L."/>
            <person name="Sekhon M."/>
            <person name="Murray J."/>
            <person name="Sheet P."/>
            <person name="Cordes M."/>
            <person name="Abu-Threideh J."/>
            <person name="Stoneking T."/>
            <person name="Kalicki J."/>
            <person name="Graves T."/>
            <person name="Harmon G."/>
            <person name="Edwards J."/>
            <person name="Latreille P."/>
            <person name="Courtney L."/>
            <person name="Cloud J."/>
            <person name="Abbott A."/>
            <person name="Scott K."/>
            <person name="Johnson D."/>
            <person name="Minx P."/>
            <person name="Bentley D."/>
            <person name="Fulton B."/>
            <person name="Miller N."/>
            <person name="Greco T."/>
            <person name="Kemp K."/>
            <person name="Kramer J."/>
            <person name="Fulton L."/>
            <person name="Mardis E."/>
            <person name="Dante M."/>
            <person name="Pepin K."/>
            <person name="Hillier L.W."/>
            <person name="Nelson J."/>
            <person name="Spieth J."/>
            <person name="Ryan E."/>
            <person name="Andrews S."/>
            <person name="Geisel C."/>
            <person name="Layman D."/>
            <person name="Du H."/>
            <person name="Ali J."/>
            <person name="Berghoff A."/>
            <person name="Jones K."/>
            <person name="Drone K."/>
            <person name="Cotton M."/>
            <person name="Joshu C."/>
            <person name="Antonoiu B."/>
            <person name="Zidanic M."/>
            <person name="Strong C."/>
            <person name="Sun H."/>
            <person name="Lamar B."/>
            <person name="Yordan C."/>
            <person name="Ma P."/>
            <person name="Zhong J."/>
            <person name="Preston R."/>
            <person name="Vil D."/>
            <person name="Shekher M."/>
            <person name="Matero A."/>
            <person name="Shah R."/>
            <person name="Swaby I.K."/>
            <person name="O'Shaughnessy A."/>
            <person name="Rodriguez M."/>
            <person name="Hoffman J."/>
            <person name="Till S."/>
            <person name="Granat S."/>
            <person name="Shohdy N."/>
            <person name="Hasegawa A."/>
            <person name="Hameed A."/>
            <person name="Lodhi M."/>
            <person name="Johnson A."/>
            <person name="Chen E."/>
            <person name="Marra M.A."/>
            <person name="Martienssen R."/>
            <person name="McCombie W.R."/>
        </authorList>
    </citation>
    <scope>NUCLEOTIDE SEQUENCE [LARGE SCALE GENOMIC DNA]</scope>
    <source>
        <strain>cv. Columbia</strain>
    </source>
</reference>
<reference key="3">
    <citation type="journal article" date="2017" name="Plant J.">
        <title>Araport11: a complete reannotation of the Arabidopsis thaliana reference genome.</title>
        <authorList>
            <person name="Cheng C.Y."/>
            <person name="Krishnakumar V."/>
            <person name="Chan A.P."/>
            <person name="Thibaud-Nissen F."/>
            <person name="Schobel S."/>
            <person name="Town C.D."/>
        </authorList>
    </citation>
    <scope>GENOME REANNOTATION</scope>
    <source>
        <strain>cv. Columbia</strain>
    </source>
</reference>
<reference key="4">
    <citation type="journal article" date="2003" name="Science">
        <title>Empirical analysis of transcriptional activity in the Arabidopsis genome.</title>
        <authorList>
            <person name="Yamada K."/>
            <person name="Lim J."/>
            <person name="Dale J.M."/>
            <person name="Chen H."/>
            <person name="Shinn P."/>
            <person name="Palm C.J."/>
            <person name="Southwick A.M."/>
            <person name="Wu H.C."/>
            <person name="Kim C.J."/>
            <person name="Nguyen M."/>
            <person name="Pham P.K."/>
            <person name="Cheuk R.F."/>
            <person name="Karlin-Newmann G."/>
            <person name="Liu S.X."/>
            <person name="Lam B."/>
            <person name="Sakano H."/>
            <person name="Wu T."/>
            <person name="Yu G."/>
            <person name="Miranda M."/>
            <person name="Quach H.L."/>
            <person name="Tripp M."/>
            <person name="Chang C.H."/>
            <person name="Lee J.M."/>
            <person name="Toriumi M.J."/>
            <person name="Chan M.M."/>
            <person name="Tang C.C."/>
            <person name="Onodera C.S."/>
            <person name="Deng J.M."/>
            <person name="Akiyama K."/>
            <person name="Ansari Y."/>
            <person name="Arakawa T."/>
            <person name="Banh J."/>
            <person name="Banno F."/>
            <person name="Bowser L."/>
            <person name="Brooks S.Y."/>
            <person name="Carninci P."/>
            <person name="Chao Q."/>
            <person name="Choy N."/>
            <person name="Enju A."/>
            <person name="Goldsmith A.D."/>
            <person name="Gurjal M."/>
            <person name="Hansen N.F."/>
            <person name="Hayashizaki Y."/>
            <person name="Johnson-Hopson C."/>
            <person name="Hsuan V.W."/>
            <person name="Iida K."/>
            <person name="Karnes M."/>
            <person name="Khan S."/>
            <person name="Koesema E."/>
            <person name="Ishida J."/>
            <person name="Jiang P.X."/>
            <person name="Jones T."/>
            <person name="Kawai J."/>
            <person name="Kamiya A."/>
            <person name="Meyers C."/>
            <person name="Nakajima M."/>
            <person name="Narusaka M."/>
            <person name="Seki M."/>
            <person name="Sakurai T."/>
            <person name="Satou M."/>
            <person name="Tamse R."/>
            <person name="Vaysberg M."/>
            <person name="Wallender E.K."/>
            <person name="Wong C."/>
            <person name="Yamamura Y."/>
            <person name="Yuan S."/>
            <person name="Shinozaki K."/>
            <person name="Davis R.W."/>
            <person name="Theologis A."/>
            <person name="Ecker J.R."/>
        </authorList>
    </citation>
    <scope>NUCLEOTIDE SEQUENCE [LARGE SCALE MRNA]</scope>
    <source>
        <strain>cv. Columbia</strain>
    </source>
</reference>
<reference key="5">
    <citation type="journal article" date="1993" name="Plant J.">
        <title>An inventory of 1152 expressed sequence tags obtained by partial sequencing of cDNAs from Arabidopsis thaliana.</title>
        <authorList>
            <person name="Hoefte H."/>
            <person name="Desprez T."/>
            <person name="Amselem J."/>
            <person name="Chiapello H."/>
            <person name="Rouze P."/>
            <person name="Caboche M."/>
            <person name="Moisan A."/>
            <person name="Jourjon M.-F."/>
            <person name="Charpenteau J.-L."/>
            <person name="Berthomieu P."/>
            <person name="Guerrier D."/>
            <person name="Giraudat J."/>
            <person name="Quigley F."/>
            <person name="Thomas F."/>
            <person name="Yu D.-Y."/>
            <person name="Mache R."/>
            <person name="Raynal M."/>
            <person name="Cooke R."/>
            <person name="Grellet F."/>
            <person name="Delseny M."/>
            <person name="Parmentier Y."/>
            <person name="de Marcillac G."/>
            <person name="Gigot C."/>
            <person name="Fleck J."/>
            <person name="Philipps G."/>
            <person name="Axelos M."/>
            <person name="Bardet C."/>
            <person name="Tremousaygue D."/>
            <person name="Lescure B."/>
        </authorList>
    </citation>
    <scope>NUCLEOTIDE SEQUENCE [LARGE SCALE MRNA] OF 1-86</scope>
    <source>
        <strain>cv. Columbia</strain>
        <tissue>Green siliques</tissue>
    </source>
</reference>
<proteinExistence type="evidence at transcript level"/>
<sequence length="173" mass="18569">MADTARGTHHDIIGRDQYPMMGRDRDQYQMSGRGSDYSKSRQIAKAATAVTAGGSLLVLSSLTLVGTVIALTVATPLLVIFSPILVPALITVALLITGFLSSGGFGIAAITVFSWIYKYATGEHPQGSDKLDSARMKLGSKAQDLKDRAQYYGQQHTGGEHDRDRTRGGQHTT</sequence>
<keyword id="KW-0551">Lipid droplet</keyword>
<keyword id="KW-0472">Membrane</keyword>
<keyword id="KW-1185">Reference proteome</keyword>
<keyword id="KW-0812">Transmembrane</keyword>
<keyword id="KW-1133">Transmembrane helix</keyword>
<comment type="function">
    <text>May have a structural role to stabilize the lipid body during desiccation of the seed by preventing coalescence of the oil. Probably interacts with both lipid and phospholipid moieties of lipid bodies. May also provide recognition signals for specific lipase anchorage in lipolysis during seedling growth.</text>
</comment>
<comment type="subcellular location">
    <subcellularLocation>
        <location>Lipid droplet</location>
    </subcellularLocation>
    <subcellularLocation>
        <location>Membrane</location>
        <topology>Multi-pass membrane protein</topology>
    </subcellularLocation>
    <text>Surface of oil bodies. Oleosins exist at a monolayer lipid/water interface.</text>
</comment>
<comment type="similarity">
    <text evidence="3">Belongs to the oleosin family.</text>
</comment>
<dbReference type="EMBL" id="X62353">
    <property type="protein sequence ID" value="CAA44225.1"/>
    <property type="molecule type" value="Genomic_DNA"/>
</dbReference>
<dbReference type="EMBL" id="AL035523">
    <property type="protein sequence ID" value="CAB36756.1"/>
    <property type="molecule type" value="Genomic_DNA"/>
</dbReference>
<dbReference type="EMBL" id="AL161562">
    <property type="protein sequence ID" value="CAB79423.1"/>
    <property type="molecule type" value="Genomic_DNA"/>
</dbReference>
<dbReference type="EMBL" id="CP002687">
    <property type="protein sequence ID" value="AEE85016.1"/>
    <property type="molecule type" value="Genomic_DNA"/>
</dbReference>
<dbReference type="EMBL" id="BT010189">
    <property type="protein sequence ID" value="AAQ22658.1"/>
    <property type="molecule type" value="mRNA"/>
</dbReference>
<dbReference type="EMBL" id="Z17738">
    <property type="protein sequence ID" value="CAA79049.1"/>
    <property type="molecule type" value="mRNA"/>
</dbReference>
<dbReference type="PIR" id="S22538">
    <property type="entry name" value="S22538"/>
</dbReference>
<dbReference type="SMR" id="P29525"/>
<dbReference type="BioGRID" id="13904">
    <property type="interactions" value="5"/>
</dbReference>
<dbReference type="FunCoup" id="P29525">
    <property type="interactions" value="192"/>
</dbReference>
<dbReference type="IntAct" id="P29525">
    <property type="interactions" value="3"/>
</dbReference>
<dbReference type="STRING" id="3702.P29525"/>
<dbReference type="GlyGen" id="P29525">
    <property type="glycosylation" value="1 site"/>
</dbReference>
<dbReference type="iPTMnet" id="P29525"/>
<dbReference type="PaxDb" id="3702-AT4G25140.1"/>
<dbReference type="ProteomicsDB" id="238942"/>
<dbReference type="EnsemblPlants" id="AT4G25140.1">
    <property type="protein sequence ID" value="AT4G25140.1"/>
    <property type="gene ID" value="AT4G25140"/>
</dbReference>
<dbReference type="Gramene" id="AT4G25140.1">
    <property type="protein sequence ID" value="AT4G25140.1"/>
    <property type="gene ID" value="AT4G25140"/>
</dbReference>
<dbReference type="KEGG" id="ath:AT4G25140"/>
<dbReference type="Araport" id="AT4G25140"/>
<dbReference type="TAIR" id="AT4G25140">
    <property type="gene designation" value="OLEO1"/>
</dbReference>
<dbReference type="eggNOG" id="ENOG502RZIP">
    <property type="taxonomic scope" value="Eukaryota"/>
</dbReference>
<dbReference type="HOGENOM" id="CLU_101983_2_0_1"/>
<dbReference type="InParanoid" id="P29525"/>
<dbReference type="OMA" id="ITAMSWI"/>
<dbReference type="PhylomeDB" id="P29525"/>
<dbReference type="PRO" id="PR:P29525"/>
<dbReference type="Proteomes" id="UP000006548">
    <property type="component" value="Chromosome 4"/>
</dbReference>
<dbReference type="ExpressionAtlas" id="P29525">
    <property type="expression patterns" value="baseline and differential"/>
</dbReference>
<dbReference type="GO" id="GO:0016020">
    <property type="term" value="C:membrane"/>
    <property type="evidence" value="ECO:0007669"/>
    <property type="project" value="UniProtKB-SubCell"/>
</dbReference>
<dbReference type="GO" id="GO:0012511">
    <property type="term" value="C:monolayer-surrounded lipid storage body"/>
    <property type="evidence" value="ECO:0007669"/>
    <property type="project" value="InterPro"/>
</dbReference>
<dbReference type="GO" id="GO:0019915">
    <property type="term" value="P:lipid storage"/>
    <property type="evidence" value="ECO:0000315"/>
    <property type="project" value="TAIR"/>
</dbReference>
<dbReference type="GO" id="GO:0050826">
    <property type="term" value="P:response to freezing"/>
    <property type="evidence" value="ECO:0000315"/>
    <property type="project" value="TAIR"/>
</dbReference>
<dbReference type="GO" id="GO:0009845">
    <property type="term" value="P:seed germination"/>
    <property type="evidence" value="ECO:0000316"/>
    <property type="project" value="TAIR"/>
</dbReference>
<dbReference type="GO" id="GO:0010344">
    <property type="term" value="P:seed oilbody biogenesis"/>
    <property type="evidence" value="ECO:0000315"/>
    <property type="project" value="TAIR"/>
</dbReference>
<dbReference type="InterPro" id="IPR000136">
    <property type="entry name" value="Oleosin"/>
</dbReference>
<dbReference type="PANTHER" id="PTHR33203">
    <property type="entry name" value="OLEOSIN"/>
    <property type="match status" value="1"/>
</dbReference>
<dbReference type="PANTHER" id="PTHR33203:SF25">
    <property type="entry name" value="OLEOSIN 18.5 KDA"/>
    <property type="match status" value="1"/>
</dbReference>
<dbReference type="Pfam" id="PF01277">
    <property type="entry name" value="Oleosin"/>
    <property type="match status" value="1"/>
</dbReference>
<dbReference type="PROSITE" id="PS00811">
    <property type="entry name" value="OLEOSINS"/>
    <property type="match status" value="1"/>
</dbReference>
<protein>
    <recommendedName>
        <fullName>Oleosin 18.5 kDa</fullName>
    </recommendedName>
</protein>
<gene>
    <name type="ordered locus">At4g25140</name>
    <name type="ORF">F13M23.280</name>
</gene>